<dbReference type="EMBL" id="AE000511">
    <property type="protein sequence ID" value="AAD07456.1"/>
    <property type="molecule type" value="Genomic_DNA"/>
</dbReference>
<dbReference type="PIR" id="G64568">
    <property type="entry name" value="G64568"/>
</dbReference>
<dbReference type="RefSeq" id="NP_207189.1">
    <property type="nucleotide sequence ID" value="NC_000915.1"/>
</dbReference>
<dbReference type="RefSeq" id="WP_000070768.1">
    <property type="nucleotide sequence ID" value="NC_018939.1"/>
</dbReference>
<dbReference type="SMR" id="O25152"/>
<dbReference type="DIP" id="DIP-3415N"/>
<dbReference type="FunCoup" id="O25152">
    <property type="interactions" value="121"/>
</dbReference>
<dbReference type="IntAct" id="O25152">
    <property type="interactions" value="4"/>
</dbReference>
<dbReference type="MINT" id="O25152"/>
<dbReference type="STRING" id="85962.HP_0391"/>
<dbReference type="PaxDb" id="85962-C694_01985"/>
<dbReference type="DNASU" id="900081"/>
<dbReference type="EnsemblBacteria" id="AAD07456">
    <property type="protein sequence ID" value="AAD07456"/>
    <property type="gene ID" value="HP_0391"/>
</dbReference>
<dbReference type="KEGG" id="heo:C694_01985"/>
<dbReference type="KEGG" id="hpy:HP_0391"/>
<dbReference type="PATRIC" id="fig|85962.47.peg.415"/>
<dbReference type="eggNOG" id="COG0835">
    <property type="taxonomic scope" value="Bacteria"/>
</dbReference>
<dbReference type="InParanoid" id="O25152"/>
<dbReference type="OrthoDB" id="9790406at2"/>
<dbReference type="PhylomeDB" id="O25152"/>
<dbReference type="Proteomes" id="UP000000429">
    <property type="component" value="Chromosome"/>
</dbReference>
<dbReference type="GO" id="GO:0005829">
    <property type="term" value="C:cytosol"/>
    <property type="evidence" value="ECO:0000318"/>
    <property type="project" value="GO_Central"/>
</dbReference>
<dbReference type="GO" id="GO:0006935">
    <property type="term" value="P:chemotaxis"/>
    <property type="evidence" value="ECO:0000318"/>
    <property type="project" value="GO_Central"/>
</dbReference>
<dbReference type="GO" id="GO:0007165">
    <property type="term" value="P:signal transduction"/>
    <property type="evidence" value="ECO:0007669"/>
    <property type="project" value="InterPro"/>
</dbReference>
<dbReference type="CDD" id="cd00732">
    <property type="entry name" value="CheW"/>
    <property type="match status" value="1"/>
</dbReference>
<dbReference type="Gene3D" id="2.40.50.180">
    <property type="entry name" value="CheA-289, Domain 4"/>
    <property type="match status" value="1"/>
</dbReference>
<dbReference type="Gene3D" id="2.30.30.40">
    <property type="entry name" value="SH3 Domains"/>
    <property type="match status" value="1"/>
</dbReference>
<dbReference type="InterPro" id="IPR039315">
    <property type="entry name" value="CheW"/>
</dbReference>
<dbReference type="InterPro" id="IPR036061">
    <property type="entry name" value="CheW-like_dom_sf"/>
</dbReference>
<dbReference type="InterPro" id="IPR002545">
    <property type="entry name" value="CheW-lke_dom"/>
</dbReference>
<dbReference type="PANTHER" id="PTHR22617:SF23">
    <property type="entry name" value="CHEMOTAXIS PROTEIN CHEW"/>
    <property type="match status" value="1"/>
</dbReference>
<dbReference type="PANTHER" id="PTHR22617">
    <property type="entry name" value="CHEMOTAXIS SENSOR HISTIDINE KINASE-RELATED"/>
    <property type="match status" value="1"/>
</dbReference>
<dbReference type="Pfam" id="PF01584">
    <property type="entry name" value="CheW"/>
    <property type="match status" value="1"/>
</dbReference>
<dbReference type="SMART" id="SM00260">
    <property type="entry name" value="CheW"/>
    <property type="match status" value="1"/>
</dbReference>
<dbReference type="SUPFAM" id="SSF50341">
    <property type="entry name" value="CheW-like"/>
    <property type="match status" value="1"/>
</dbReference>
<dbReference type="PROSITE" id="PS50851">
    <property type="entry name" value="CHEW"/>
    <property type="match status" value="1"/>
</dbReference>
<proteinExistence type="evidence at protein level"/>
<sequence length="165" mass="18967">MSNQLKDLFERQKEASAGSKQEDNEEVLQFIGFIIGDEEYAIPILNILEIVKPIGYTRVPETPNYVLGVFNLRGNVFPLISLRLKFGLKAEKQNKDTRYLVVRHNDQIAGFFIDRLTEAIRIKQTDIDPVPETLSDNNNLTYGIGKQNDRLVTILRVEEILKKDF</sequence>
<protein>
    <recommendedName>
        <fullName evidence="2">Chemotaxis protein CheW</fullName>
    </recommendedName>
</protein>
<comment type="function">
    <text evidence="1">Plays an essential role in chemotaxis signal transduction system in order to colonize the host stomach.</text>
</comment>
<comment type="interaction">
    <interactant intactId="EBI-7496390">
        <id>O25152</id>
    </interactant>
    <interactant intactId="EBI-6410665">
        <id>O25153</id>
        <label>cheAY</label>
    </interactant>
    <organismsDiffer>false</organismsDiffer>
    <experiments>3</experiments>
</comment>
<comment type="interaction">
    <interactant intactId="EBI-7496390">
        <id>O25152</id>
    </interactant>
    <interactant intactId="EBI-9260819">
        <id>O25606</id>
        <label>HP_0952</label>
    </interactant>
    <organismsDiffer>false</organismsDiffer>
    <experiments>3</experiments>
</comment>
<comment type="disruption phenotype">
    <text evidence="1">Deletion abolishes swarming.</text>
</comment>
<comment type="similarity">
    <text evidence="3">Belongs to the CheW family.</text>
</comment>
<reference key="1">
    <citation type="journal article" date="1997" name="Nature">
        <title>The complete genome sequence of the gastric pathogen Helicobacter pylori.</title>
        <authorList>
            <person name="Tomb J.-F."/>
            <person name="White O."/>
            <person name="Kerlavage A.R."/>
            <person name="Clayton R.A."/>
            <person name="Sutton G.G."/>
            <person name="Fleischmann R.D."/>
            <person name="Ketchum K.A."/>
            <person name="Klenk H.-P."/>
            <person name="Gill S.R."/>
            <person name="Dougherty B.A."/>
            <person name="Nelson K.E."/>
            <person name="Quackenbush J."/>
            <person name="Zhou L."/>
            <person name="Kirkness E.F."/>
            <person name="Peterson S.N."/>
            <person name="Loftus B.J."/>
            <person name="Richardson D.L."/>
            <person name="Dodson R.J."/>
            <person name="Khalak H.G."/>
            <person name="Glodek A."/>
            <person name="McKenney K."/>
            <person name="FitzGerald L.M."/>
            <person name="Lee N."/>
            <person name="Adams M.D."/>
            <person name="Hickey E.K."/>
            <person name="Berg D.E."/>
            <person name="Gocayne J.D."/>
            <person name="Utterback T.R."/>
            <person name="Peterson J.D."/>
            <person name="Kelley J.M."/>
            <person name="Cotton M.D."/>
            <person name="Weidman J.F."/>
            <person name="Fujii C."/>
            <person name="Bowman C."/>
            <person name="Watthey L."/>
            <person name="Wallin E."/>
            <person name="Hayes W.S."/>
            <person name="Borodovsky M."/>
            <person name="Karp P.D."/>
            <person name="Smith H.O."/>
            <person name="Fraser C.M."/>
            <person name="Venter J.C."/>
        </authorList>
    </citation>
    <scope>NUCLEOTIDE SEQUENCE [LARGE SCALE GENOMIC DNA]</scope>
    <source>
        <strain>ATCC 700392 / 26695</strain>
    </source>
</reference>
<reference key="2">
    <citation type="journal article" date="2001" name="Microbiology">
        <title>Chemotaxis in the human gastric pathogen Helicobacter pylori: different roles for CheW and the three CheV paralogues, and evidence for CheV2 phosphorylation.</title>
        <authorList>
            <person name="Pittman M.S."/>
            <person name="Goodwin M."/>
            <person name="Kelly D.J."/>
        </authorList>
    </citation>
    <scope>FUNCTION</scope>
    <scope>DISRUPTION PHENOTYPE</scope>
</reference>
<accession>O25152</accession>
<feature type="chain" id="PRO_0000448748" description="Chemotaxis protein CheW">
    <location>
        <begin position="1"/>
        <end position="165"/>
    </location>
</feature>
<gene>
    <name evidence="2" type="primary">cheW</name>
    <name type="ordered locus">HP_0391</name>
</gene>
<keyword id="KW-1185">Reference proteome</keyword>
<name>CHEW_HELPY</name>
<organism>
    <name type="scientific">Helicobacter pylori (strain ATCC 700392 / 26695)</name>
    <name type="common">Campylobacter pylori</name>
    <dbReference type="NCBI Taxonomy" id="85962"/>
    <lineage>
        <taxon>Bacteria</taxon>
        <taxon>Pseudomonadati</taxon>
        <taxon>Campylobacterota</taxon>
        <taxon>Epsilonproteobacteria</taxon>
        <taxon>Campylobacterales</taxon>
        <taxon>Helicobacteraceae</taxon>
        <taxon>Helicobacter</taxon>
    </lineage>
</organism>
<evidence type="ECO:0000269" key="1">
    <source>
    </source>
</evidence>
<evidence type="ECO:0000303" key="2">
    <source>
    </source>
</evidence>
<evidence type="ECO:0000305" key="3"/>